<sequence length="62" mass="6977">MGKQCFVTGRKASTGNRRSHALNSTKRRWNANLQKVRILVDGKPKKVWVSARALKSGKVTRV</sequence>
<reference key="1">
    <citation type="journal article" date="2007" name="PLoS ONE">
        <title>Molecular correlates of host specialization in Staphylococcus aureus.</title>
        <authorList>
            <person name="Herron-Olson L."/>
            <person name="Fitzgerald J.R."/>
            <person name="Musser J.M."/>
            <person name="Kapur V."/>
        </authorList>
    </citation>
    <scope>NUCLEOTIDE SEQUENCE [LARGE SCALE GENOMIC DNA]</scope>
    <source>
        <strain>bovine RF122 / ET3-1</strain>
    </source>
</reference>
<comment type="similarity">
    <text evidence="1">Belongs to the bacterial ribosomal protein bL28 family.</text>
</comment>
<proteinExistence type="evidence at protein level"/>
<accession>Q2YXJ2</accession>
<gene>
    <name evidence="1" type="primary">rpmB</name>
    <name type="ordered locus">SAB1088c</name>
</gene>
<dbReference type="EMBL" id="AJ938182">
    <property type="protein sequence ID" value="CAI80777.1"/>
    <property type="molecule type" value="Genomic_DNA"/>
</dbReference>
<dbReference type="RefSeq" id="WP_000517908.1">
    <property type="nucleotide sequence ID" value="NC_007622.1"/>
</dbReference>
<dbReference type="PDB" id="6FXC">
    <property type="method" value="EM"/>
    <property type="resolution" value="6.76 A"/>
    <property type="chains" value="AV/BV=3-60"/>
</dbReference>
<dbReference type="PDBsum" id="6FXC"/>
<dbReference type="EMDB" id="EMD-0243"/>
<dbReference type="EMDB" id="EMD-3637"/>
<dbReference type="SMR" id="Q2YXJ2"/>
<dbReference type="GeneID" id="98345539"/>
<dbReference type="KEGG" id="sab:SAB1088c"/>
<dbReference type="HOGENOM" id="CLU_064548_7_1_9"/>
<dbReference type="GO" id="GO:1990904">
    <property type="term" value="C:ribonucleoprotein complex"/>
    <property type="evidence" value="ECO:0007669"/>
    <property type="project" value="UniProtKB-KW"/>
</dbReference>
<dbReference type="GO" id="GO:0005840">
    <property type="term" value="C:ribosome"/>
    <property type="evidence" value="ECO:0007669"/>
    <property type="project" value="UniProtKB-KW"/>
</dbReference>
<dbReference type="GO" id="GO:0003735">
    <property type="term" value="F:structural constituent of ribosome"/>
    <property type="evidence" value="ECO:0007669"/>
    <property type="project" value="InterPro"/>
</dbReference>
<dbReference type="GO" id="GO:0006412">
    <property type="term" value="P:translation"/>
    <property type="evidence" value="ECO:0007669"/>
    <property type="project" value="UniProtKB-UniRule"/>
</dbReference>
<dbReference type="Gene3D" id="2.30.170.40">
    <property type="entry name" value="Ribosomal protein L28/L24"/>
    <property type="match status" value="1"/>
</dbReference>
<dbReference type="HAMAP" id="MF_00373">
    <property type="entry name" value="Ribosomal_bL28"/>
    <property type="match status" value="1"/>
</dbReference>
<dbReference type="InterPro" id="IPR050096">
    <property type="entry name" value="Bacterial_rp_bL28"/>
</dbReference>
<dbReference type="InterPro" id="IPR026569">
    <property type="entry name" value="Ribosomal_bL28"/>
</dbReference>
<dbReference type="InterPro" id="IPR034704">
    <property type="entry name" value="Ribosomal_bL28/bL31-like_sf"/>
</dbReference>
<dbReference type="InterPro" id="IPR001383">
    <property type="entry name" value="Ribosomal_bL28_bact-type"/>
</dbReference>
<dbReference type="InterPro" id="IPR037147">
    <property type="entry name" value="Ribosomal_bL28_sf"/>
</dbReference>
<dbReference type="NCBIfam" id="TIGR00009">
    <property type="entry name" value="L28"/>
    <property type="match status" value="1"/>
</dbReference>
<dbReference type="PANTHER" id="PTHR39080">
    <property type="entry name" value="50S RIBOSOMAL PROTEIN L28"/>
    <property type="match status" value="1"/>
</dbReference>
<dbReference type="PANTHER" id="PTHR39080:SF1">
    <property type="entry name" value="LARGE RIBOSOMAL SUBUNIT PROTEIN BL28A"/>
    <property type="match status" value="1"/>
</dbReference>
<dbReference type="Pfam" id="PF00830">
    <property type="entry name" value="Ribosomal_L28"/>
    <property type="match status" value="1"/>
</dbReference>
<dbReference type="SUPFAM" id="SSF143800">
    <property type="entry name" value="L28p-like"/>
    <property type="match status" value="1"/>
</dbReference>
<evidence type="ECO:0000255" key="1">
    <source>
        <dbReference type="HAMAP-Rule" id="MF_00373"/>
    </source>
</evidence>
<evidence type="ECO:0000256" key="2">
    <source>
        <dbReference type="SAM" id="MobiDB-lite"/>
    </source>
</evidence>
<evidence type="ECO:0000305" key="3"/>
<feature type="chain" id="PRO_1000007367" description="Large ribosomal subunit protein bL28">
    <location>
        <begin position="1"/>
        <end position="62"/>
    </location>
</feature>
<feature type="region of interest" description="Disordered" evidence="2">
    <location>
        <begin position="1"/>
        <end position="22"/>
    </location>
</feature>
<organism>
    <name type="scientific">Staphylococcus aureus (strain bovine RF122 / ET3-1)</name>
    <dbReference type="NCBI Taxonomy" id="273036"/>
    <lineage>
        <taxon>Bacteria</taxon>
        <taxon>Bacillati</taxon>
        <taxon>Bacillota</taxon>
        <taxon>Bacilli</taxon>
        <taxon>Bacillales</taxon>
        <taxon>Staphylococcaceae</taxon>
        <taxon>Staphylococcus</taxon>
    </lineage>
</organism>
<name>RL28_STAAB</name>
<keyword id="KW-0002">3D-structure</keyword>
<keyword id="KW-0687">Ribonucleoprotein</keyword>
<keyword id="KW-0689">Ribosomal protein</keyword>
<protein>
    <recommendedName>
        <fullName evidence="1">Large ribosomal subunit protein bL28</fullName>
    </recommendedName>
    <alternativeName>
        <fullName evidence="3">50S ribosomal protein L28</fullName>
    </alternativeName>
</protein>